<name>T2R40_GORGO</name>
<proteinExistence type="inferred from homology"/>
<dbReference type="EMBL" id="AY724924">
    <property type="protein sequence ID" value="AAU21130.1"/>
    <property type="molecule type" value="Genomic_DNA"/>
</dbReference>
<dbReference type="SMR" id="Q645Y9"/>
<dbReference type="FunCoup" id="Q645Y9">
    <property type="interactions" value="294"/>
</dbReference>
<dbReference type="STRING" id="9593.ENSGGOP00000016151"/>
<dbReference type="GlyCosmos" id="Q645Y9">
    <property type="glycosylation" value="2 sites, No reported glycans"/>
</dbReference>
<dbReference type="eggNOG" id="ENOG502SKRK">
    <property type="taxonomic scope" value="Eukaryota"/>
</dbReference>
<dbReference type="InParanoid" id="Q645Y9"/>
<dbReference type="Proteomes" id="UP000001519">
    <property type="component" value="Unplaced"/>
</dbReference>
<dbReference type="GO" id="GO:0016020">
    <property type="term" value="C:membrane"/>
    <property type="evidence" value="ECO:0000318"/>
    <property type="project" value="GO_Central"/>
</dbReference>
<dbReference type="GO" id="GO:0005886">
    <property type="term" value="C:plasma membrane"/>
    <property type="evidence" value="ECO:0007669"/>
    <property type="project" value="UniProtKB-ARBA"/>
</dbReference>
<dbReference type="GO" id="GO:0033038">
    <property type="term" value="F:bitter taste receptor activity"/>
    <property type="evidence" value="ECO:0000318"/>
    <property type="project" value="GO_Central"/>
</dbReference>
<dbReference type="GO" id="GO:0004930">
    <property type="term" value="F:G protein-coupled receptor activity"/>
    <property type="evidence" value="ECO:0007669"/>
    <property type="project" value="UniProtKB-KW"/>
</dbReference>
<dbReference type="GO" id="GO:0001580">
    <property type="term" value="P:detection of chemical stimulus involved in sensory perception of bitter taste"/>
    <property type="evidence" value="ECO:0000318"/>
    <property type="project" value="GO_Central"/>
</dbReference>
<dbReference type="CDD" id="cd15014">
    <property type="entry name" value="7tm_TAS2R40"/>
    <property type="match status" value="1"/>
</dbReference>
<dbReference type="FunFam" id="1.20.1070.10:FF:000055">
    <property type="entry name" value="Taste receptor type 2"/>
    <property type="match status" value="1"/>
</dbReference>
<dbReference type="Gene3D" id="1.20.1070.10">
    <property type="entry name" value="Rhodopsin 7-helix transmembrane proteins"/>
    <property type="match status" value="1"/>
</dbReference>
<dbReference type="InterPro" id="IPR007960">
    <property type="entry name" value="TAS2R"/>
</dbReference>
<dbReference type="PANTHER" id="PTHR11394">
    <property type="entry name" value="TASTE RECEPTOR TYPE 2"/>
    <property type="match status" value="1"/>
</dbReference>
<dbReference type="PANTHER" id="PTHR11394:SF47">
    <property type="entry name" value="TASTE RECEPTOR TYPE 2 MEMBER 40"/>
    <property type="match status" value="1"/>
</dbReference>
<dbReference type="Pfam" id="PF05296">
    <property type="entry name" value="TAS2R"/>
    <property type="match status" value="1"/>
</dbReference>
<dbReference type="SUPFAM" id="SSF81321">
    <property type="entry name" value="Family A G protein-coupled receptor-like"/>
    <property type="match status" value="1"/>
</dbReference>
<keyword id="KW-0297">G-protein coupled receptor</keyword>
<keyword id="KW-0325">Glycoprotein</keyword>
<keyword id="KW-0472">Membrane</keyword>
<keyword id="KW-0675">Receptor</keyword>
<keyword id="KW-1185">Reference proteome</keyword>
<keyword id="KW-0716">Sensory transduction</keyword>
<keyword id="KW-0919">Taste</keyword>
<keyword id="KW-0807">Transducer</keyword>
<keyword id="KW-0812">Transmembrane</keyword>
<keyword id="KW-1133">Transmembrane helix</keyword>
<comment type="function">
    <text evidence="1">Gustducin-coupled receptor implicated in the perception of bitter compounds in the oral cavity and the gastrointestinal tract. Signals through PLCB2 and the calcium-regulated cation channel TRPM5 (By similarity).</text>
</comment>
<comment type="subcellular location">
    <subcellularLocation>
        <location>Membrane</location>
        <topology>Multi-pass membrane protein</topology>
    </subcellularLocation>
</comment>
<comment type="miscellaneous">
    <text>Several bitter taste receptors are expressed in a single taste receptor cell.</text>
</comment>
<comment type="similarity">
    <text evidence="3">Belongs to the G-protein coupled receptor T2R family.</text>
</comment>
<organism>
    <name type="scientific">Gorilla gorilla gorilla</name>
    <name type="common">Western lowland gorilla</name>
    <dbReference type="NCBI Taxonomy" id="9595"/>
    <lineage>
        <taxon>Eukaryota</taxon>
        <taxon>Metazoa</taxon>
        <taxon>Chordata</taxon>
        <taxon>Craniata</taxon>
        <taxon>Vertebrata</taxon>
        <taxon>Euteleostomi</taxon>
        <taxon>Mammalia</taxon>
        <taxon>Eutheria</taxon>
        <taxon>Euarchontoglires</taxon>
        <taxon>Primates</taxon>
        <taxon>Haplorrhini</taxon>
        <taxon>Catarrhini</taxon>
        <taxon>Hominidae</taxon>
        <taxon>Gorilla</taxon>
    </lineage>
</organism>
<sequence length="323" mass="36772">MATVNTDATDKDISKFKVTFTLVVSGIECITGILGSGFITAIYGAEWARGKTLPTGDRIMLMLSFSRLLLQIWMMLENICSLLFRIVYNQNSVYILFKVITVFLNHSNLWFAAWLKVFYCLRIANFNHPLFFLMKRKIIVLMPWLLRLSVSVSLSFSFPLSRDVFNVYVNSSIPIPSSNSTEKKYFSETNMVNLVFFYNMGIFVPLIMFILAATLLILSLKRHTLHMGSNATGSRDPSMKAHIGAIKATSYFLILYIFNAIALFLSMSNIFDTYSSWNILCKIIMAAYPAGHSVQLILGNPGLRRAWKRFQHQVPLYLKGQTL</sequence>
<gene>
    <name type="primary">TAS2R40</name>
</gene>
<feature type="chain" id="PRO_0000082287" description="Taste receptor type 2 member 40">
    <location>
        <begin position="1"/>
        <end position="323"/>
    </location>
</feature>
<feature type="topological domain" description="Extracellular" evidence="2">
    <location>
        <begin position="1"/>
        <end position="14"/>
    </location>
</feature>
<feature type="transmembrane region" description="Helical; Name=1" evidence="2">
    <location>
        <begin position="15"/>
        <end position="35"/>
    </location>
</feature>
<feature type="topological domain" description="Cytoplasmic" evidence="2">
    <location>
        <begin position="36"/>
        <end position="58"/>
    </location>
</feature>
<feature type="transmembrane region" description="Helical; Name=2" evidence="2">
    <location>
        <begin position="59"/>
        <end position="79"/>
    </location>
</feature>
<feature type="topological domain" description="Extracellular" evidence="2">
    <location>
        <begin position="80"/>
        <end position="100"/>
    </location>
</feature>
<feature type="transmembrane region" description="Helical; Name=3" evidence="2">
    <location>
        <begin position="101"/>
        <end position="121"/>
    </location>
</feature>
<feature type="topological domain" description="Cytoplasmic" evidence="2">
    <location>
        <begin position="122"/>
        <end position="140"/>
    </location>
</feature>
<feature type="transmembrane region" description="Helical; Name=4" evidence="2">
    <location>
        <begin position="141"/>
        <end position="162"/>
    </location>
</feature>
<feature type="topological domain" description="Extracellular" evidence="2">
    <location>
        <begin position="163"/>
        <end position="190"/>
    </location>
</feature>
<feature type="transmembrane region" description="Helical; Name=5" evidence="2">
    <location>
        <begin position="191"/>
        <end position="211"/>
    </location>
</feature>
<feature type="topological domain" description="Cytoplasmic" evidence="2">
    <location>
        <begin position="212"/>
        <end position="247"/>
    </location>
</feature>
<feature type="transmembrane region" description="Helical; Name=6" evidence="2">
    <location>
        <begin position="248"/>
        <end position="268"/>
    </location>
</feature>
<feature type="topological domain" description="Extracellular" evidence="2">
    <location>
        <begin position="269"/>
        <end position="276"/>
    </location>
</feature>
<feature type="transmembrane region" description="Helical; Name=7" evidence="2">
    <location>
        <begin position="277"/>
        <end position="297"/>
    </location>
</feature>
<feature type="topological domain" description="Cytoplasmic" evidence="2">
    <location>
        <begin position="298"/>
        <end position="323"/>
    </location>
</feature>
<feature type="glycosylation site" description="N-linked (GlcNAc...) asparagine" evidence="2">
    <location>
        <position position="170"/>
    </location>
</feature>
<feature type="glycosylation site" description="N-linked (GlcNAc...) asparagine" evidence="2">
    <location>
        <position position="179"/>
    </location>
</feature>
<protein>
    <recommendedName>
        <fullName>Taste receptor type 2 member 40</fullName>
        <shortName>T2R40</shortName>
    </recommendedName>
</protein>
<evidence type="ECO:0000250" key="1"/>
<evidence type="ECO:0000255" key="2"/>
<evidence type="ECO:0000305" key="3"/>
<reference key="1">
    <citation type="journal article" date="2005" name="Mol. Biol. Evol.">
        <title>Evolution of bitter taste receptors in humans and apes.</title>
        <authorList>
            <person name="Fischer A."/>
            <person name="Gilad Y."/>
            <person name="Man O."/>
            <person name="Paeaebo S."/>
        </authorList>
    </citation>
    <scope>NUCLEOTIDE SEQUENCE [GENOMIC DNA]</scope>
</reference>
<accession>Q645Y9</accession>